<protein>
    <recommendedName>
        <fullName>Ornithine carbamoyltransferase, catabolic</fullName>
        <shortName>OTCase</shortName>
        <ecNumber>2.1.3.3</ecNumber>
    </recommendedName>
</protein>
<dbReference type="EC" id="2.1.3.3"/>
<dbReference type="EMBL" id="AE006468">
    <property type="protein sequence ID" value="AAL23284.1"/>
    <property type="molecule type" value="Genomic_DNA"/>
</dbReference>
<dbReference type="RefSeq" id="NP_463325.1">
    <property type="nucleotide sequence ID" value="NC_003197.2"/>
</dbReference>
<dbReference type="SMR" id="Q8ZK35"/>
<dbReference type="STRING" id="99287.STM4465"/>
<dbReference type="PaxDb" id="99287-STM4465"/>
<dbReference type="GeneID" id="1255991"/>
<dbReference type="KEGG" id="stm:STM4465"/>
<dbReference type="PATRIC" id="fig|99287.12.peg.4698"/>
<dbReference type="HOGENOM" id="CLU_043846_3_1_6"/>
<dbReference type="OMA" id="YGMKGLE"/>
<dbReference type="PhylomeDB" id="Q8ZK35"/>
<dbReference type="BioCyc" id="SENT99287:STM4465-MONOMER"/>
<dbReference type="UniPathway" id="UPA00254">
    <property type="reaction ID" value="UER00365"/>
</dbReference>
<dbReference type="Proteomes" id="UP000001014">
    <property type="component" value="Chromosome"/>
</dbReference>
<dbReference type="GO" id="GO:0005737">
    <property type="term" value="C:cytoplasm"/>
    <property type="evidence" value="ECO:0007669"/>
    <property type="project" value="UniProtKB-SubCell"/>
</dbReference>
<dbReference type="GO" id="GO:0016597">
    <property type="term" value="F:amino acid binding"/>
    <property type="evidence" value="ECO:0007669"/>
    <property type="project" value="InterPro"/>
</dbReference>
<dbReference type="GO" id="GO:0004585">
    <property type="term" value="F:ornithine carbamoyltransferase activity"/>
    <property type="evidence" value="ECO:0000318"/>
    <property type="project" value="GO_Central"/>
</dbReference>
<dbReference type="GO" id="GO:0042450">
    <property type="term" value="P:arginine biosynthetic process via ornithine"/>
    <property type="evidence" value="ECO:0000318"/>
    <property type="project" value="GO_Central"/>
</dbReference>
<dbReference type="GO" id="GO:0019547">
    <property type="term" value="P:arginine catabolic process to ornithine"/>
    <property type="evidence" value="ECO:0007669"/>
    <property type="project" value="UniProtKB-UniPathway"/>
</dbReference>
<dbReference type="GO" id="GO:0019240">
    <property type="term" value="P:citrulline biosynthetic process"/>
    <property type="evidence" value="ECO:0000318"/>
    <property type="project" value="GO_Central"/>
</dbReference>
<dbReference type="GO" id="GO:0006526">
    <property type="term" value="P:L-arginine biosynthetic process"/>
    <property type="evidence" value="ECO:0007669"/>
    <property type="project" value="UniProtKB-UniRule"/>
</dbReference>
<dbReference type="FunFam" id="3.40.50.1370:FF:000003">
    <property type="entry name" value="Ornithine carbamoyltransferase"/>
    <property type="match status" value="1"/>
</dbReference>
<dbReference type="FunFam" id="3.40.50.1370:FF:000004">
    <property type="entry name" value="Ornithine carbamoyltransferase"/>
    <property type="match status" value="1"/>
</dbReference>
<dbReference type="Gene3D" id="3.40.50.1370">
    <property type="entry name" value="Aspartate/ornithine carbamoyltransferase"/>
    <property type="match status" value="2"/>
</dbReference>
<dbReference type="HAMAP" id="MF_01109">
    <property type="entry name" value="OTCase"/>
    <property type="match status" value="1"/>
</dbReference>
<dbReference type="InterPro" id="IPR006132">
    <property type="entry name" value="Asp/Orn_carbamoyltranf_P-bd"/>
</dbReference>
<dbReference type="InterPro" id="IPR006130">
    <property type="entry name" value="Asp/Orn_carbamoylTrfase"/>
</dbReference>
<dbReference type="InterPro" id="IPR036901">
    <property type="entry name" value="Asp/Orn_carbamoylTrfase_sf"/>
</dbReference>
<dbReference type="InterPro" id="IPR006131">
    <property type="entry name" value="Asp_carbamoyltransf_Asp/Orn-bd"/>
</dbReference>
<dbReference type="InterPro" id="IPR002292">
    <property type="entry name" value="Orn/put_carbamltrans"/>
</dbReference>
<dbReference type="InterPro" id="IPR024904">
    <property type="entry name" value="OTCase_ArgI"/>
</dbReference>
<dbReference type="NCBIfam" id="TIGR00658">
    <property type="entry name" value="orni_carb_tr"/>
    <property type="match status" value="1"/>
</dbReference>
<dbReference type="NCBIfam" id="NF003286">
    <property type="entry name" value="PRK04284.1"/>
    <property type="match status" value="1"/>
</dbReference>
<dbReference type="PANTHER" id="PTHR45753:SF2">
    <property type="entry name" value="ORNITHINE CARBAMOYLTRANSFERASE"/>
    <property type="match status" value="1"/>
</dbReference>
<dbReference type="PANTHER" id="PTHR45753">
    <property type="entry name" value="ORNITHINE CARBAMOYLTRANSFERASE, MITOCHONDRIAL"/>
    <property type="match status" value="1"/>
</dbReference>
<dbReference type="Pfam" id="PF00185">
    <property type="entry name" value="OTCace"/>
    <property type="match status" value="1"/>
</dbReference>
<dbReference type="Pfam" id="PF02729">
    <property type="entry name" value="OTCace_N"/>
    <property type="match status" value="1"/>
</dbReference>
<dbReference type="PRINTS" id="PR00100">
    <property type="entry name" value="AOTCASE"/>
</dbReference>
<dbReference type="PRINTS" id="PR00102">
    <property type="entry name" value="OTCASE"/>
</dbReference>
<dbReference type="SUPFAM" id="SSF53671">
    <property type="entry name" value="Aspartate/ornithine carbamoyltransferase"/>
    <property type="match status" value="1"/>
</dbReference>
<dbReference type="PROSITE" id="PS00097">
    <property type="entry name" value="CARBAMOYLTRANSFERASE"/>
    <property type="match status" value="1"/>
</dbReference>
<organism>
    <name type="scientific">Salmonella typhimurium (strain LT2 / SGSC1412 / ATCC 700720)</name>
    <dbReference type="NCBI Taxonomy" id="99287"/>
    <lineage>
        <taxon>Bacteria</taxon>
        <taxon>Pseudomonadati</taxon>
        <taxon>Pseudomonadota</taxon>
        <taxon>Gammaproteobacteria</taxon>
        <taxon>Enterobacterales</taxon>
        <taxon>Enterobacteriaceae</taxon>
        <taxon>Salmonella</taxon>
    </lineage>
</organism>
<comment type="function">
    <text evidence="1">Reversibly catalyzes the transfer of the carbamoyl group from carbamoyl phosphate (CP) to the N(epsilon) atom of ornithine (ORN) to produce L-citrulline.</text>
</comment>
<comment type="catalytic activity">
    <reaction>
        <text>carbamoyl phosphate + L-ornithine = L-citrulline + phosphate + H(+)</text>
        <dbReference type="Rhea" id="RHEA:19513"/>
        <dbReference type="ChEBI" id="CHEBI:15378"/>
        <dbReference type="ChEBI" id="CHEBI:43474"/>
        <dbReference type="ChEBI" id="CHEBI:46911"/>
        <dbReference type="ChEBI" id="CHEBI:57743"/>
        <dbReference type="ChEBI" id="CHEBI:58228"/>
        <dbReference type="EC" id="2.1.3.3"/>
    </reaction>
</comment>
<comment type="pathway">
    <text>Amino-acid degradation; L-arginine degradation via ADI pathway; carbamoyl phosphate from L-arginine: step 2/2.</text>
</comment>
<comment type="subcellular location">
    <subcellularLocation>
        <location evidence="1">Cytoplasm</location>
    </subcellularLocation>
</comment>
<comment type="similarity">
    <text evidence="3">Belongs to the aspartate/ornithine carbamoyltransferase superfamily. OTCase family.</text>
</comment>
<accession>Q8ZK35</accession>
<reference key="1">
    <citation type="journal article" date="2001" name="Nature">
        <title>Complete genome sequence of Salmonella enterica serovar Typhimurium LT2.</title>
        <authorList>
            <person name="McClelland M."/>
            <person name="Sanderson K.E."/>
            <person name="Spieth J."/>
            <person name="Clifton S.W."/>
            <person name="Latreille P."/>
            <person name="Courtney L."/>
            <person name="Porwollik S."/>
            <person name="Ali J."/>
            <person name="Dante M."/>
            <person name="Du F."/>
            <person name="Hou S."/>
            <person name="Layman D."/>
            <person name="Leonard S."/>
            <person name="Nguyen C."/>
            <person name="Scott K."/>
            <person name="Holmes A."/>
            <person name="Grewal N."/>
            <person name="Mulvaney E."/>
            <person name="Ryan E."/>
            <person name="Sun H."/>
            <person name="Florea L."/>
            <person name="Miller W."/>
            <person name="Stoneking T."/>
            <person name="Nhan M."/>
            <person name="Waterston R."/>
            <person name="Wilson R.K."/>
        </authorList>
    </citation>
    <scope>NUCLEOTIDE SEQUENCE [LARGE SCALE GENOMIC DNA]</scope>
    <source>
        <strain>LT2 / SGSC1412 / ATCC 700720</strain>
    </source>
</reference>
<feature type="chain" id="PRO_0000113005" description="Ornithine carbamoyltransferase, catabolic">
    <location>
        <begin position="1"/>
        <end position="334"/>
    </location>
</feature>
<feature type="binding site" evidence="2">
    <location>
        <begin position="57"/>
        <end position="60"/>
    </location>
    <ligand>
        <name>carbamoyl phosphate</name>
        <dbReference type="ChEBI" id="CHEBI:58228"/>
    </ligand>
</feature>
<feature type="binding site" evidence="2">
    <location>
        <position position="84"/>
    </location>
    <ligand>
        <name>carbamoyl phosphate</name>
        <dbReference type="ChEBI" id="CHEBI:58228"/>
    </ligand>
</feature>
<feature type="binding site" evidence="2">
    <location>
        <position position="108"/>
    </location>
    <ligand>
        <name>carbamoyl phosphate</name>
        <dbReference type="ChEBI" id="CHEBI:58228"/>
    </ligand>
</feature>
<feature type="binding site" evidence="2">
    <location>
        <begin position="135"/>
        <end position="138"/>
    </location>
    <ligand>
        <name>carbamoyl phosphate</name>
        <dbReference type="ChEBI" id="CHEBI:58228"/>
    </ligand>
</feature>
<feature type="binding site" evidence="2">
    <location>
        <position position="169"/>
    </location>
    <ligand>
        <name>L-ornithine</name>
        <dbReference type="ChEBI" id="CHEBI:46911"/>
    </ligand>
</feature>
<feature type="binding site" evidence="2">
    <location>
        <position position="233"/>
    </location>
    <ligand>
        <name>L-ornithine</name>
        <dbReference type="ChEBI" id="CHEBI:46911"/>
    </ligand>
</feature>
<feature type="binding site" evidence="2">
    <location>
        <begin position="237"/>
        <end position="238"/>
    </location>
    <ligand>
        <name>L-ornithine</name>
        <dbReference type="ChEBI" id="CHEBI:46911"/>
    </ligand>
</feature>
<feature type="binding site" evidence="2">
    <location>
        <begin position="275"/>
        <end position="276"/>
    </location>
    <ligand>
        <name>carbamoyl phosphate</name>
        <dbReference type="ChEBI" id="CHEBI:58228"/>
    </ligand>
</feature>
<feature type="binding site" evidence="2">
    <location>
        <position position="320"/>
    </location>
    <ligand>
        <name>carbamoyl phosphate</name>
        <dbReference type="ChEBI" id="CHEBI:58228"/>
    </ligand>
</feature>
<evidence type="ECO:0000250" key="1"/>
<evidence type="ECO:0000255" key="2">
    <source>
        <dbReference type="HAMAP-Rule" id="MF_01109"/>
    </source>
</evidence>
<evidence type="ECO:0000305" key="3"/>
<name>OTCC_SALTY</name>
<proteinExistence type="inferred from homology"/>
<sequence length="334" mass="36816">MVISLKNRNFLKLLDYTPAEIQHLIDLAIELKAAKKAGCEKQTLIGKNIALIFEKTSTRTRCAFEVAAFDQGAQVTYLGPSGSQIGHKESMKDTARVLGRMYDGIEYRGFGQHIVEELGEYAGVPVWNGLTDEFHPTQILADLMTMLEHAPGKTLPELSFAYLGDARNNMGNSLMVGAAKMGMDIRLIAPKSFWPDAALVAQCREIASVTGARITLTESVEDGVHGVDFLYTDVWVSMGEPKEAWAERVSLMTPYQVNQQVVNATGNPDVKFMHCLPAFHNEHTKVGREIEMAYGLKGLEVTEEVFESAGSIVFDEAENRMHTIKAVMVATLGD</sequence>
<keyword id="KW-0056">Arginine metabolism</keyword>
<keyword id="KW-0963">Cytoplasm</keyword>
<keyword id="KW-1185">Reference proteome</keyword>
<keyword id="KW-0808">Transferase</keyword>
<gene>
    <name type="primary">arcB</name>
    <name type="ordered locus">STM4465</name>
</gene>